<feature type="chain" id="PRO_1000014449" description="UPF0178 protein SAHV_0678">
    <location>
        <begin position="1"/>
        <end position="152"/>
    </location>
</feature>
<name>Y678_STAA1</name>
<evidence type="ECO:0000255" key="1">
    <source>
        <dbReference type="HAMAP-Rule" id="MF_00489"/>
    </source>
</evidence>
<proteinExistence type="inferred from homology"/>
<accession>A7WZF1</accession>
<organism>
    <name type="scientific">Staphylococcus aureus (strain Mu3 / ATCC 700698)</name>
    <dbReference type="NCBI Taxonomy" id="418127"/>
    <lineage>
        <taxon>Bacteria</taxon>
        <taxon>Bacillati</taxon>
        <taxon>Bacillota</taxon>
        <taxon>Bacilli</taxon>
        <taxon>Bacillales</taxon>
        <taxon>Staphylococcaceae</taxon>
        <taxon>Staphylococcus</taxon>
    </lineage>
</organism>
<sequence length="152" mass="17240">MTHIIIDGDACPVVDSIIDLTTETGIFVTIIRSFSHFSNQLYPPHVSTLYVDDGPDAVDYKIVQLSTKDDIVVTQDYGLASLLVDKVLIVMHHNGKIYNSKNIQQLLDKRYINAQIRKQGGRHKGPPPFTKQDQKVFEQSLLKVIHRIKELD</sequence>
<protein>
    <recommendedName>
        <fullName evidence="1">UPF0178 protein SAHV_0678</fullName>
    </recommendedName>
</protein>
<dbReference type="EMBL" id="AP009324">
    <property type="protein sequence ID" value="BAF77561.1"/>
    <property type="molecule type" value="Genomic_DNA"/>
</dbReference>
<dbReference type="RefSeq" id="WP_000148826.1">
    <property type="nucleotide sequence ID" value="NC_009782.1"/>
</dbReference>
<dbReference type="SMR" id="A7WZF1"/>
<dbReference type="KEGG" id="saw:SAHV_0678"/>
<dbReference type="HOGENOM" id="CLU_106619_0_0_9"/>
<dbReference type="HAMAP" id="MF_00489">
    <property type="entry name" value="UPF0178"/>
    <property type="match status" value="1"/>
</dbReference>
<dbReference type="InterPro" id="IPR003791">
    <property type="entry name" value="UPF0178"/>
</dbReference>
<dbReference type="NCBIfam" id="NF001095">
    <property type="entry name" value="PRK00124.1"/>
    <property type="match status" value="1"/>
</dbReference>
<dbReference type="PANTHER" id="PTHR35146">
    <property type="entry name" value="UPF0178 PROTEIN YAII"/>
    <property type="match status" value="1"/>
</dbReference>
<dbReference type="PANTHER" id="PTHR35146:SF1">
    <property type="entry name" value="UPF0178 PROTEIN YAII"/>
    <property type="match status" value="1"/>
</dbReference>
<dbReference type="Pfam" id="PF02639">
    <property type="entry name" value="DUF188"/>
    <property type="match status" value="1"/>
</dbReference>
<reference key="1">
    <citation type="journal article" date="2008" name="Antimicrob. Agents Chemother.">
        <title>Mutated response regulator graR is responsible for phenotypic conversion of Staphylococcus aureus from heterogeneous vancomycin-intermediate resistance to vancomycin-intermediate resistance.</title>
        <authorList>
            <person name="Neoh H.-M."/>
            <person name="Cui L."/>
            <person name="Yuzawa H."/>
            <person name="Takeuchi F."/>
            <person name="Matsuo M."/>
            <person name="Hiramatsu K."/>
        </authorList>
    </citation>
    <scope>NUCLEOTIDE SEQUENCE [LARGE SCALE GENOMIC DNA]</scope>
    <source>
        <strain>Mu3 / ATCC 700698</strain>
    </source>
</reference>
<gene>
    <name type="ordered locus">SAHV_0678</name>
</gene>
<comment type="similarity">
    <text evidence="1">Belongs to the UPF0178 family.</text>
</comment>